<gene>
    <name evidence="1" type="primary">cmk</name>
    <name type="ordered locus">PXO_00890</name>
</gene>
<comment type="catalytic activity">
    <reaction evidence="1">
        <text>CMP + ATP = CDP + ADP</text>
        <dbReference type="Rhea" id="RHEA:11600"/>
        <dbReference type="ChEBI" id="CHEBI:30616"/>
        <dbReference type="ChEBI" id="CHEBI:58069"/>
        <dbReference type="ChEBI" id="CHEBI:60377"/>
        <dbReference type="ChEBI" id="CHEBI:456216"/>
        <dbReference type="EC" id="2.7.4.25"/>
    </reaction>
</comment>
<comment type="catalytic activity">
    <reaction evidence="1">
        <text>dCMP + ATP = dCDP + ADP</text>
        <dbReference type="Rhea" id="RHEA:25094"/>
        <dbReference type="ChEBI" id="CHEBI:30616"/>
        <dbReference type="ChEBI" id="CHEBI:57566"/>
        <dbReference type="ChEBI" id="CHEBI:58593"/>
        <dbReference type="ChEBI" id="CHEBI:456216"/>
        <dbReference type="EC" id="2.7.4.25"/>
    </reaction>
</comment>
<comment type="subcellular location">
    <subcellularLocation>
        <location evidence="1">Cytoplasm</location>
    </subcellularLocation>
</comment>
<comment type="similarity">
    <text evidence="1">Belongs to the cytidylate kinase family. Type 1 subfamily.</text>
</comment>
<sequence length="227" mass="24086">MTDLSPVLTIDGPSGAGKGTVSRIVAARLGWHYLDSGALYRAVGVAASWADLDVSDPAALVRCTFDTKVEFDDAGEAGLRVLVNGADVTSELRLETTGALASAIAAIPEVRSALKERQRAFRRAPGLVADGRDMGTVIFPDAAFKVFLTASAEERAGRRHKQLMEKGVSVTFADLLREIMARDARDAQRVVAPLRSAKDAVLIDTSGIGVEDVVQRVVGLLADRTPS</sequence>
<protein>
    <recommendedName>
        <fullName evidence="1">Cytidylate kinase</fullName>
        <shortName evidence="1">CK</shortName>
        <ecNumber evidence="1">2.7.4.25</ecNumber>
    </recommendedName>
    <alternativeName>
        <fullName evidence="1">Cytidine monophosphate kinase</fullName>
        <shortName evidence="1">CMP kinase</shortName>
    </alternativeName>
</protein>
<evidence type="ECO:0000255" key="1">
    <source>
        <dbReference type="HAMAP-Rule" id="MF_00238"/>
    </source>
</evidence>
<accession>B2SLH6</accession>
<feature type="chain" id="PRO_1000100701" description="Cytidylate kinase">
    <location>
        <begin position="1"/>
        <end position="227"/>
    </location>
</feature>
<feature type="binding site" evidence="1">
    <location>
        <begin position="12"/>
        <end position="20"/>
    </location>
    <ligand>
        <name>ATP</name>
        <dbReference type="ChEBI" id="CHEBI:30616"/>
    </ligand>
</feature>
<name>KCY_XANOP</name>
<dbReference type="EC" id="2.7.4.25" evidence="1"/>
<dbReference type="EMBL" id="CP000967">
    <property type="protein sequence ID" value="ACD59038.1"/>
    <property type="molecule type" value="Genomic_DNA"/>
</dbReference>
<dbReference type="RefSeq" id="WP_011258877.1">
    <property type="nucleotide sequence ID" value="NC_010717.2"/>
</dbReference>
<dbReference type="SMR" id="B2SLH6"/>
<dbReference type="KEGG" id="xop:PXO_00890"/>
<dbReference type="eggNOG" id="COG0283">
    <property type="taxonomic scope" value="Bacteria"/>
</dbReference>
<dbReference type="HOGENOM" id="CLU_079959_2_0_6"/>
<dbReference type="Proteomes" id="UP000001740">
    <property type="component" value="Chromosome"/>
</dbReference>
<dbReference type="GO" id="GO:0005737">
    <property type="term" value="C:cytoplasm"/>
    <property type="evidence" value="ECO:0007669"/>
    <property type="project" value="UniProtKB-SubCell"/>
</dbReference>
<dbReference type="GO" id="GO:0005524">
    <property type="term" value="F:ATP binding"/>
    <property type="evidence" value="ECO:0007669"/>
    <property type="project" value="UniProtKB-UniRule"/>
</dbReference>
<dbReference type="GO" id="GO:0036430">
    <property type="term" value="F:CMP kinase activity"/>
    <property type="evidence" value="ECO:0007669"/>
    <property type="project" value="RHEA"/>
</dbReference>
<dbReference type="GO" id="GO:0036431">
    <property type="term" value="F:dCMP kinase activity"/>
    <property type="evidence" value="ECO:0007669"/>
    <property type="project" value="RHEA"/>
</dbReference>
<dbReference type="GO" id="GO:0006220">
    <property type="term" value="P:pyrimidine nucleotide metabolic process"/>
    <property type="evidence" value="ECO:0007669"/>
    <property type="project" value="UniProtKB-UniRule"/>
</dbReference>
<dbReference type="CDD" id="cd02020">
    <property type="entry name" value="CMPK"/>
    <property type="match status" value="1"/>
</dbReference>
<dbReference type="FunFam" id="3.40.50.300:FF:000262">
    <property type="entry name" value="Cytidylate kinase"/>
    <property type="match status" value="1"/>
</dbReference>
<dbReference type="Gene3D" id="3.40.50.300">
    <property type="entry name" value="P-loop containing nucleotide triphosphate hydrolases"/>
    <property type="match status" value="1"/>
</dbReference>
<dbReference type="HAMAP" id="MF_00238">
    <property type="entry name" value="Cytidyl_kinase_type1"/>
    <property type="match status" value="1"/>
</dbReference>
<dbReference type="InterPro" id="IPR003136">
    <property type="entry name" value="Cytidylate_kin"/>
</dbReference>
<dbReference type="InterPro" id="IPR011994">
    <property type="entry name" value="Cytidylate_kinase_dom"/>
</dbReference>
<dbReference type="InterPro" id="IPR027417">
    <property type="entry name" value="P-loop_NTPase"/>
</dbReference>
<dbReference type="NCBIfam" id="TIGR00017">
    <property type="entry name" value="cmk"/>
    <property type="match status" value="1"/>
</dbReference>
<dbReference type="Pfam" id="PF02224">
    <property type="entry name" value="Cytidylate_kin"/>
    <property type="match status" value="1"/>
</dbReference>
<dbReference type="SUPFAM" id="SSF52540">
    <property type="entry name" value="P-loop containing nucleoside triphosphate hydrolases"/>
    <property type="match status" value="1"/>
</dbReference>
<proteinExistence type="inferred from homology"/>
<keyword id="KW-0067">ATP-binding</keyword>
<keyword id="KW-0963">Cytoplasm</keyword>
<keyword id="KW-0418">Kinase</keyword>
<keyword id="KW-0547">Nucleotide-binding</keyword>
<keyword id="KW-0808">Transferase</keyword>
<organism>
    <name type="scientific">Xanthomonas oryzae pv. oryzae (strain PXO99A)</name>
    <dbReference type="NCBI Taxonomy" id="360094"/>
    <lineage>
        <taxon>Bacteria</taxon>
        <taxon>Pseudomonadati</taxon>
        <taxon>Pseudomonadota</taxon>
        <taxon>Gammaproteobacteria</taxon>
        <taxon>Lysobacterales</taxon>
        <taxon>Lysobacteraceae</taxon>
        <taxon>Xanthomonas</taxon>
    </lineage>
</organism>
<reference key="1">
    <citation type="journal article" date="2008" name="BMC Genomics">
        <title>Genome sequence and rapid evolution of the rice pathogen Xanthomonas oryzae pv. oryzae PXO99A.</title>
        <authorList>
            <person name="Salzberg S.L."/>
            <person name="Sommer D.D."/>
            <person name="Schatz M.C."/>
            <person name="Phillippy A.M."/>
            <person name="Rabinowicz P.D."/>
            <person name="Tsuge S."/>
            <person name="Furutani A."/>
            <person name="Ochiai H."/>
            <person name="Delcher A.L."/>
            <person name="Kelley D."/>
            <person name="Madupu R."/>
            <person name="Puiu D."/>
            <person name="Radune D."/>
            <person name="Shumway M."/>
            <person name="Trapnell C."/>
            <person name="Aparna G."/>
            <person name="Jha G."/>
            <person name="Pandey A."/>
            <person name="Patil P.B."/>
            <person name="Ishihara H."/>
            <person name="Meyer D.F."/>
            <person name="Szurek B."/>
            <person name="Verdier V."/>
            <person name="Koebnik R."/>
            <person name="Dow J.M."/>
            <person name="Ryan R.P."/>
            <person name="Hirata H."/>
            <person name="Tsuyumu S."/>
            <person name="Won Lee S."/>
            <person name="Seo Y.-S."/>
            <person name="Sriariyanum M."/>
            <person name="Ronald P.C."/>
            <person name="Sonti R.V."/>
            <person name="Van Sluys M.-A."/>
            <person name="Leach J.E."/>
            <person name="White F.F."/>
            <person name="Bogdanove A.J."/>
        </authorList>
    </citation>
    <scope>NUCLEOTIDE SEQUENCE [LARGE SCALE GENOMIC DNA]</scope>
    <source>
        <strain>PXO99A</strain>
    </source>
</reference>